<evidence type="ECO:0000250" key="1">
    <source>
        <dbReference type="UniProtKB" id="P42489"/>
    </source>
</evidence>
<evidence type="ECO:0000256" key="2">
    <source>
        <dbReference type="SAM" id="MobiDB-lite"/>
    </source>
</evidence>
<evidence type="ECO:0000305" key="3"/>
<keyword id="KW-0235">DNA replication</keyword>
<keyword id="KW-0238">DNA-binding</keyword>
<keyword id="KW-0239">DNA-directed DNA polymerase</keyword>
<keyword id="KW-0244">Early protein</keyword>
<keyword id="KW-0548">Nucleotidyltransferase</keyword>
<keyword id="KW-0677">Repeat</keyword>
<keyword id="KW-0808">Transferase</keyword>
<keyword id="KW-1194">Viral DNA replication</keyword>
<comment type="function">
    <text>DNA-directed DNA polymerase involved in viral DNA replication.</text>
</comment>
<comment type="catalytic activity">
    <reaction>
        <text>DNA(n) + a 2'-deoxyribonucleoside 5'-triphosphate = DNA(n+1) + diphosphate</text>
        <dbReference type="Rhea" id="RHEA:22508"/>
        <dbReference type="Rhea" id="RHEA-COMP:17339"/>
        <dbReference type="Rhea" id="RHEA-COMP:17340"/>
        <dbReference type="ChEBI" id="CHEBI:33019"/>
        <dbReference type="ChEBI" id="CHEBI:61560"/>
        <dbReference type="ChEBI" id="CHEBI:173112"/>
        <dbReference type="EC" id="2.7.7.7"/>
    </reaction>
</comment>
<comment type="induction">
    <text evidence="3">Expressed in the early phase of the viral replicative cycle.</text>
</comment>
<comment type="miscellaneous">
    <text>Consistent with its intracellular location, ASFV encodes its own replicative DNA polymerase and three base excision repair enzymes: a class II AP endonuclease, the repair polymerase Pol X, and an ATP-dependent DNA ligase.</text>
</comment>
<comment type="similarity">
    <text evidence="3">Belongs to the DNA polymerase type-B family.</text>
</comment>
<feature type="chain" id="PRO_0000046503" description="DNA polymerase beta">
    <location>
        <begin position="1"/>
        <end position="1244"/>
    </location>
</feature>
<feature type="repeat" description="1">
    <location>
        <begin position="1069"/>
        <end position="1072"/>
    </location>
</feature>
<feature type="repeat" description="2">
    <location>
        <begin position="1073"/>
        <end position="1076"/>
    </location>
</feature>
<feature type="repeat" description="3">
    <location>
        <begin position="1077"/>
        <end position="1080"/>
    </location>
</feature>
<feature type="repeat" description="4">
    <location>
        <begin position="1081"/>
        <end position="1084"/>
    </location>
</feature>
<feature type="repeat" description="5">
    <location>
        <begin position="1085"/>
        <end position="1088"/>
    </location>
</feature>
<feature type="repeat" description="6">
    <location>
        <begin position="1089"/>
        <end position="1092"/>
    </location>
</feature>
<feature type="repeat" description="7">
    <location>
        <begin position="1093"/>
        <end position="1096"/>
    </location>
</feature>
<feature type="repeat" description="8">
    <location>
        <begin position="1097"/>
        <end position="1100"/>
    </location>
</feature>
<feature type="repeat" description="9">
    <location>
        <begin position="1101"/>
        <end position="1104"/>
    </location>
</feature>
<feature type="repeat" description="10">
    <location>
        <begin position="1105"/>
        <end position="1108"/>
    </location>
</feature>
<feature type="repeat" description="11">
    <location>
        <begin position="1109"/>
        <end position="1112"/>
    </location>
</feature>
<feature type="repeat" description="12">
    <location>
        <begin position="1113"/>
        <end position="1116"/>
    </location>
</feature>
<feature type="repeat" description="13">
    <location>
        <begin position="1117"/>
        <end position="1120"/>
    </location>
</feature>
<feature type="region of interest" description="13 X 4 AA tandem repeats of A-G-N-P">
    <location>
        <begin position="1069"/>
        <end position="1120"/>
    </location>
</feature>
<feature type="region of interest" description="Disordered" evidence="2">
    <location>
        <begin position="1069"/>
        <end position="1118"/>
    </location>
</feature>
<feature type="sequence variant" description="In strain: Isolate PAAR-100; phosphonoacetate-resistant.">
    <original>D</original>
    <variation>G</variation>
    <location>
        <position position="436"/>
    </location>
</feature>
<feature type="sequence variant" description="In strain: Isolate PAAR-463; phosphonoacetate-resistant.">
    <original>L</original>
    <variation>F</variation>
    <location>
        <position position="512"/>
    </location>
</feature>
<feature type="sequence variant" description="In strain: Isolate PAAR-20; phosphonoacetate-resistant.">
    <original>A</original>
    <variation>V</variation>
    <location>
        <position position="515"/>
    </location>
</feature>
<name>DPOL_ASFL6</name>
<sequence length="1244" mass="142534">MDRSEIVARENPVITQRVTNLLRTNAPLLFMPIDIHEVRYGAYMLFMYGSLENGYKAEVRIENIPVFFDVQIESDNTNQLFLKSLLAAENITYERLETLTQRPVMGYREKEKEFAPYIRIFFKSLYERRKAITYLNNMGYNTAADDTTCYYRMVSRELKLPLTTWIQLQHYSYEPRGLVHRFSVTPEDLVSYQDDGPTDHSIVMAYDIETYSPVKGTVPDPNQANDVVFMICMRIFWIHSTEPLASTCITMAPCKKSPEWTTIVCSSEKNLLLSFAEQFSRWAPDICTGFNDSRYDWPFIVEKSMQHGILEEVFNKMSLFWPQKLDTILKCYYVKEKRVKISAEKSIISSFLHTPGCLPIDVRNMCMQLYPKAEKTSLKAFLENCGLDSKVDLPYHLMWKYYETRDSEKMADVAYYCIIDAQRCQDLLVRHNVIPDRREVGILSYTSLYDCIYYAGGHKVCNMLIAYAIHDEYGRIACSTIARGKREHGKYPGAFVIDPVKGLEQDKPTTGLDFASLYPSLIMAYNFSPEKFVASRDEANSLMAKGESLHYVSFHFNNRLVEGWFVRHNNVPDKMGLYPKVLIDLLNKRTALKQELKKLGEKKECIHESHPGFKELQFRHAMVDAKQKALKIFMNTFYGEAGNNLSPFFLLPLAGGVTSSGQYNLKLVYNFVINKGYGIKYGDTDSLYITCPDSLYTEVTDAYLNSQKTTKHYEQLCHEKVLLSMKAMSTLCAEVNEYLRQDNGTSYLRMAYEEVLFPVCFTGKKKYYGIAHVNTPNFNTKELFIRGIDIIKQGQTKLTKTIGTRIMEESMKLRRPEDHRPPLIEIVKTVLKDAVVNMKQWNFEDFIQTDAWRPDKDNKAVQIFMSRMHARREQLKKHGAAATSQFAEPEPGERFSYVIVEKQVQFDIQGHRTDTTRKGDKMEYVSEAKAKNLPIDILFYINNYVLGLCARFINENEEFQPPGNVSNKDEYAQRRAKSYLQKFVQSIHPKDKSVIKQGIVHRQCYKYVHQEIKKKIGIFADLYKEFFNNTTNPIESFIQSTQFMIHYFDEEQKVNHSMKKMVEQHAALAGNPAGNPAGNPAGNPAGNPAGNPAGNPAGNPAGNPAGNPAGNPAGNPAGNPASNALMRAIFTQLITEEKKIVQALYNKGDEIHDLLTYIINNINYKIATFQTKQMLTFELSSTHVELLLKLNKTWLILVGIRVAKKHLHALLGLHNNEPPSKTFIQQAIEEECGSIKPSCYDFIS</sequence>
<proteinExistence type="inferred from homology"/>
<organism>
    <name type="scientific">African swine fever virus (isolate Pig/Portugal/Lis 60/1960)</name>
    <name type="common">ASFV</name>
    <dbReference type="NCBI Taxonomy" id="82815"/>
    <lineage>
        <taxon>Viruses</taxon>
        <taxon>Varidnaviria</taxon>
        <taxon>Bamfordvirae</taxon>
        <taxon>Nucleocytoviricota</taxon>
        <taxon>Pokkesviricetes</taxon>
        <taxon>Asfuvirales</taxon>
        <taxon>Asfarviridae</taxon>
        <taxon>Asfivirus</taxon>
        <taxon>African swine fever virus</taxon>
    </lineage>
</organism>
<dbReference type="EC" id="2.7.7.7"/>
<dbReference type="EMBL" id="X73330">
    <property type="protein sequence ID" value="CAA51757.1"/>
    <property type="molecule type" value="Genomic_DNA"/>
</dbReference>
<dbReference type="EMBL" id="U27573">
    <property type="protein sequence ID" value="AAB60596.1"/>
    <property type="molecule type" value="Genomic_DNA"/>
</dbReference>
<dbReference type="EMBL" id="U27574">
    <property type="protein sequence ID" value="AAB60597.1"/>
    <property type="molecule type" value="Genomic_DNA"/>
</dbReference>
<dbReference type="EMBL" id="U27575">
    <property type="protein sequence ID" value="AAB60598.1"/>
    <property type="molecule type" value="Genomic_DNA"/>
</dbReference>
<dbReference type="PIR" id="S37034">
    <property type="entry name" value="S37034"/>
</dbReference>
<dbReference type="SMR" id="P43139"/>
<dbReference type="GO" id="GO:0003677">
    <property type="term" value="F:DNA binding"/>
    <property type="evidence" value="ECO:0007669"/>
    <property type="project" value="UniProtKB-KW"/>
</dbReference>
<dbReference type="GO" id="GO:0003887">
    <property type="term" value="F:DNA-directed DNA polymerase activity"/>
    <property type="evidence" value="ECO:0007669"/>
    <property type="project" value="UniProtKB-KW"/>
</dbReference>
<dbReference type="GO" id="GO:0000166">
    <property type="term" value="F:nucleotide binding"/>
    <property type="evidence" value="ECO:0007669"/>
    <property type="project" value="InterPro"/>
</dbReference>
<dbReference type="GO" id="GO:0006261">
    <property type="term" value="P:DNA-templated DNA replication"/>
    <property type="evidence" value="ECO:0007669"/>
    <property type="project" value="TreeGrafter"/>
</dbReference>
<dbReference type="GO" id="GO:0039693">
    <property type="term" value="P:viral DNA genome replication"/>
    <property type="evidence" value="ECO:0007669"/>
    <property type="project" value="UniProtKB-KW"/>
</dbReference>
<dbReference type="Gene3D" id="1.10.132.60">
    <property type="entry name" value="DNA polymerase family B, C-terminal domain"/>
    <property type="match status" value="1"/>
</dbReference>
<dbReference type="Gene3D" id="1.10.287.690">
    <property type="entry name" value="Helix hairpin bin"/>
    <property type="match status" value="1"/>
</dbReference>
<dbReference type="Gene3D" id="3.90.1600.10">
    <property type="entry name" value="Palm domain of DNA polymerase"/>
    <property type="match status" value="1"/>
</dbReference>
<dbReference type="Gene3D" id="3.30.420.10">
    <property type="entry name" value="Ribonuclease H-like superfamily/Ribonuclease H"/>
    <property type="match status" value="1"/>
</dbReference>
<dbReference type="InterPro" id="IPR006172">
    <property type="entry name" value="DNA-dir_DNA_pol_B"/>
</dbReference>
<dbReference type="InterPro" id="IPR017964">
    <property type="entry name" value="DNA-dir_DNA_pol_B_CS"/>
</dbReference>
<dbReference type="InterPro" id="IPR006133">
    <property type="entry name" value="DNA-dir_DNA_pol_B_exonuc"/>
</dbReference>
<dbReference type="InterPro" id="IPR006134">
    <property type="entry name" value="DNA-dir_DNA_pol_B_multi_dom"/>
</dbReference>
<dbReference type="InterPro" id="IPR043502">
    <property type="entry name" value="DNA/RNA_pol_sf"/>
</dbReference>
<dbReference type="InterPro" id="IPR042087">
    <property type="entry name" value="DNA_pol_B_thumb"/>
</dbReference>
<dbReference type="InterPro" id="IPR023211">
    <property type="entry name" value="DNA_pol_palm_dom_sf"/>
</dbReference>
<dbReference type="InterPro" id="IPR050240">
    <property type="entry name" value="DNA_pol_type-B"/>
</dbReference>
<dbReference type="InterPro" id="IPR012337">
    <property type="entry name" value="RNaseH-like_sf"/>
</dbReference>
<dbReference type="InterPro" id="IPR036397">
    <property type="entry name" value="RNaseH_sf"/>
</dbReference>
<dbReference type="PANTHER" id="PTHR10322">
    <property type="entry name" value="DNA POLYMERASE CATALYTIC SUBUNIT"/>
    <property type="match status" value="1"/>
</dbReference>
<dbReference type="PANTHER" id="PTHR10322:SF23">
    <property type="entry name" value="DNA POLYMERASE DELTA CATALYTIC SUBUNIT"/>
    <property type="match status" value="1"/>
</dbReference>
<dbReference type="Pfam" id="PF00136">
    <property type="entry name" value="DNA_pol_B"/>
    <property type="match status" value="1"/>
</dbReference>
<dbReference type="Pfam" id="PF03104">
    <property type="entry name" value="DNA_pol_B_exo1"/>
    <property type="match status" value="1"/>
</dbReference>
<dbReference type="PRINTS" id="PR00106">
    <property type="entry name" value="DNAPOLB"/>
</dbReference>
<dbReference type="SMART" id="SM00486">
    <property type="entry name" value="POLBc"/>
    <property type="match status" value="1"/>
</dbReference>
<dbReference type="SUPFAM" id="SSF56672">
    <property type="entry name" value="DNA/RNA polymerases"/>
    <property type="match status" value="1"/>
</dbReference>
<dbReference type="SUPFAM" id="SSF53098">
    <property type="entry name" value="Ribonuclease H-like"/>
    <property type="match status" value="1"/>
</dbReference>
<dbReference type="PROSITE" id="PS00116">
    <property type="entry name" value="DNA_POLYMERASE_B"/>
    <property type="match status" value="1"/>
</dbReference>
<gene>
    <name type="primary">DPOL</name>
</gene>
<protein>
    <recommendedName>
        <fullName evidence="1">DNA polymerase beta</fullName>
        <ecNumber>2.7.7.7</ecNumber>
    </recommendedName>
</protein>
<accession>P43139</accession>
<accession>Q89937</accession>
<accession>Q89938</accession>
<accession>Q89939</accession>
<reference key="1">
    <citation type="journal article" date="1994" name="Nucleic Acids Res.">
        <title>Genetic identification and nucleotide sequence of the DNA polymerase gene of African swine fever virus.</title>
        <authorList>
            <person name="Martins A."/>
            <person name="Ribeiro G."/>
            <person name="Marques M.I."/>
            <person name="Costa J.V."/>
        </authorList>
    </citation>
    <scope>NUCLEOTIDE SEQUENCE [GENOMIC DNA]</scope>
</reference>
<reference key="2">
    <citation type="journal article" date="1995" name="Virology">
        <title>Functional and molecular characterization of African swine fever virus mutants resistant to phosphonoacetic acid.</title>
        <authorList>
            <person name="Marques M.I."/>
            <person name="Costa J.V."/>
        </authorList>
    </citation>
    <scope>NUCLEOTIDE SEQUENCE [GENOMIC DNA]</scope>
    <source>
        <strain>Isolate PAAR-100</strain>
    </source>
</reference>
<organismHost>
    <name type="scientific">Ornithodoros</name>
    <name type="common">relapsing fever ticks</name>
    <dbReference type="NCBI Taxonomy" id="6937"/>
</organismHost>
<organismHost>
    <name type="scientific">Sus scrofa</name>
    <name type="common">Pig</name>
    <dbReference type="NCBI Taxonomy" id="9823"/>
</organismHost>